<sequence length="1100" mass="122726">MAPPSEETPLISQRSCSLSSSEAGALHVLLPPRGPGPPQRLSFSFGDYLAEDLCVRAAKACGILPVYHSLFALATEDLSCWFPPSHIFSIEDVDTQVLVYRLRFYFPGWFGLETCHRFGLHKDLTSAILDVHVLEHLFAQHRSDLVSGRLPVGLSLKDQGEFLSLAVLDLAQMARKQAQRPGELLKSVSYKACLPPSLRDLIQGQSFVTRRRIRRTVVQALRRVVACQADRYALMAKYILDLERLHPAATTESFLVGLPGAQEEPGCLRVTGDNGIAWSSKDQELFQTFCDFPEIVDVSIKQAPRVGPAGEHRLVTITRMDGHILEAEFPGLPEALSFVALVDGYFRLICDSRHFFCKEVAPPRLLEEEAELCHGPITLDFAIHKLKAAGSLPGSYILRRSPQDYDSFLLTACVQTPLGPDYKGCLIRQDPSGAFSLVGLSQLHRSLQELLTACWHSGLQVDGTALNLTSCCVPRPKEKSNLIVVRRGRNPTPAPGHSPSCCALTKLSFHTIPADSLEWHENLGHGSFTKIFHGHRREVVDGETHDTEVLLKVMDSRHQNCMESFLEAASLMSQVSYPHLVLLHGVCMAGDSIMVQEFVYLGAIDTYLRKRGHLVPASWKLQVTKQLAYALNYLEDKGLPHGNVSARKVLLAREGVDGNPPFIKLSDPGVSPTVLSLEMLTDRIPWVAPECLQEAGTLNLEADKWGFGATTWEVFSGAPMHITSLEPAKKLKFYEDRGQLPALKWTELEGLIAQCMAYDPGRRPSFRAILRDLNGLITSDYELLSDPTPGIPNPRDELCGGAQLYACQDPAIFEERHLKYISLLGKGNFGSVELCRYDPLGDNTGPLVAVKQLQHSGPEQQRDFQREIQILKALHCDFIVKYRGVSYGPGRQSLRLVMEYLPSGCLRDFLQRHRARLHNDRLLLFAWQICKGMEYLGARRCVHRDLAARNILVESEAHVKIADFGLAKLLPLGKDYYVVREPGQSPIFWYAPESLSDNIFSRQSDVWSFGVVLYELFTYSDKSCSPSTEFLRMMGPEREGSPLCHLLELLAEGRRLPPPSTCPTEVQELMQLCWSPNPQDRPAFDTLSPQLDALWRGSPG</sequence>
<keyword id="KW-1064">Adaptive immunity</keyword>
<keyword id="KW-0067">ATP-binding</keyword>
<keyword id="KW-0963">Cytoplasm</keyword>
<keyword id="KW-0391">Immunity</keyword>
<keyword id="KW-0399">Innate immunity</keyword>
<keyword id="KW-0418">Kinase</keyword>
<keyword id="KW-0472">Membrane</keyword>
<keyword id="KW-0547">Nucleotide-binding</keyword>
<keyword id="KW-0597">Phosphoprotein</keyword>
<keyword id="KW-1185">Reference proteome</keyword>
<keyword id="KW-0677">Repeat</keyword>
<keyword id="KW-0727">SH2 domain</keyword>
<keyword id="KW-0808">Transferase</keyword>
<keyword id="KW-0829">Tyrosine-protein kinase</keyword>
<gene>
    <name evidence="8" type="primary">Jak3</name>
</gene>
<name>JAK3_RAT</name>
<organism>
    <name type="scientific">Rattus norvegicus</name>
    <name type="common">Rat</name>
    <dbReference type="NCBI Taxonomy" id="10116"/>
    <lineage>
        <taxon>Eukaryota</taxon>
        <taxon>Metazoa</taxon>
        <taxon>Chordata</taxon>
        <taxon>Craniata</taxon>
        <taxon>Vertebrata</taxon>
        <taxon>Euteleostomi</taxon>
        <taxon>Mammalia</taxon>
        <taxon>Eutheria</taxon>
        <taxon>Euarchontoglires</taxon>
        <taxon>Glires</taxon>
        <taxon>Rodentia</taxon>
        <taxon>Myomorpha</taxon>
        <taxon>Muroidea</taxon>
        <taxon>Muridae</taxon>
        <taxon>Murinae</taxon>
        <taxon>Rattus</taxon>
    </lineage>
</organism>
<feature type="chain" id="PRO_0000088117" description="Tyrosine-protein kinase JAK3">
    <location>
        <begin position="1"/>
        <end position="1100"/>
    </location>
</feature>
<feature type="domain" description="FERM" evidence="4">
    <location>
        <begin position="24"/>
        <end position="353"/>
    </location>
</feature>
<feature type="domain" description="SH2; atypical">
    <location>
        <begin position="372"/>
        <end position="472"/>
    </location>
</feature>
<feature type="domain" description="Protein kinase 1" evidence="5">
    <location>
        <begin position="517"/>
        <end position="777"/>
    </location>
</feature>
<feature type="domain" description="Protein kinase 2" evidence="5">
    <location>
        <begin position="818"/>
        <end position="1091"/>
    </location>
</feature>
<feature type="region of interest" description="cytokine/interferon/growth hormone receptors" evidence="1">
    <location>
        <begin position="1"/>
        <end position="223"/>
    </location>
</feature>
<feature type="active site" description="Proton acceptor" evidence="5 6">
    <location>
        <position position="945"/>
    </location>
</feature>
<feature type="binding site" evidence="5">
    <location>
        <begin position="824"/>
        <end position="832"/>
    </location>
    <ligand>
        <name>ATP</name>
        <dbReference type="ChEBI" id="CHEBI:30616"/>
    </ligand>
</feature>
<feature type="binding site" evidence="5">
    <location>
        <position position="851"/>
    </location>
    <ligand>
        <name>ATP</name>
        <dbReference type="ChEBI" id="CHEBI:30616"/>
    </ligand>
</feature>
<feature type="modified residue" description="Phosphoserine" evidence="3">
    <location>
        <position position="17"/>
    </location>
</feature>
<feature type="modified residue" description="Phosphotyrosine; by autocatalysis" evidence="2">
    <location>
        <position position="781"/>
    </location>
</feature>
<feature type="modified residue" description="Phosphotyrosine" evidence="2">
    <location>
        <position position="900"/>
    </location>
</feature>
<feature type="modified residue" description="Phosphotyrosine" evidence="2">
    <location>
        <position position="935"/>
    </location>
</feature>
<feature type="modified residue" description="Phosphotyrosine; by autocatalysis" evidence="2">
    <location>
        <position position="976"/>
    </location>
</feature>
<feature type="modified residue" description="Phosphotyrosine; by autocatalysis" evidence="2">
    <location>
        <position position="977"/>
    </location>
</feature>
<feature type="sequence conflict" description="In Ref. 1; BAA05868." evidence="7" ref="1">
    <original>S</original>
    <variation>E</variation>
    <location>
        <position position="893"/>
    </location>
</feature>
<feature type="sequence conflict" description="In Ref. 1; BAA05868." evidence="7" ref="1">
    <original>E</original>
    <variation>V</variation>
    <location>
        <position position="981"/>
    </location>
</feature>
<feature type="sequence conflict" description="In Ref. 1; BAA05868." evidence="7" ref="1">
    <original>M</original>
    <variation>I</variation>
    <location>
        <position position="1034"/>
    </location>
</feature>
<evidence type="ECO:0000250" key="1"/>
<evidence type="ECO:0000250" key="2">
    <source>
        <dbReference type="UniProtKB" id="P52333"/>
    </source>
</evidence>
<evidence type="ECO:0000250" key="3">
    <source>
        <dbReference type="UniProtKB" id="Q62137"/>
    </source>
</evidence>
<evidence type="ECO:0000255" key="4">
    <source>
        <dbReference type="PROSITE-ProRule" id="PRU00084"/>
    </source>
</evidence>
<evidence type="ECO:0000255" key="5">
    <source>
        <dbReference type="PROSITE-ProRule" id="PRU00159"/>
    </source>
</evidence>
<evidence type="ECO:0000255" key="6">
    <source>
        <dbReference type="PROSITE-ProRule" id="PRU10028"/>
    </source>
</evidence>
<evidence type="ECO:0000305" key="7"/>
<evidence type="ECO:0000312" key="8">
    <source>
        <dbReference type="RGD" id="2940"/>
    </source>
</evidence>
<protein>
    <recommendedName>
        <fullName evidence="7">Tyrosine-protein kinase JAK3</fullName>
        <ecNumber>2.7.10.2</ecNumber>
    </recommendedName>
    <alternativeName>
        <fullName>Janus kinase 3</fullName>
        <shortName>JAK-3</shortName>
    </alternativeName>
</protein>
<proteinExistence type="evidence at transcript level"/>
<dbReference type="EC" id="2.7.10.2"/>
<dbReference type="EMBL" id="D28508">
    <property type="protein sequence ID" value="BAA05868.1"/>
    <property type="status" value="ALT_FRAME"/>
    <property type="molecule type" value="mRNA"/>
</dbReference>
<dbReference type="EMBL" id="AABR07024869">
    <property type="status" value="NOT_ANNOTATED_CDS"/>
    <property type="molecule type" value="Genomic_DNA"/>
</dbReference>
<dbReference type="EMBL" id="CH474031">
    <property type="protein sequence ID" value="EDL90763.1"/>
    <property type="molecule type" value="Genomic_DNA"/>
</dbReference>
<dbReference type="EMBL" id="CH474031">
    <property type="protein sequence ID" value="EDL90761.1"/>
    <property type="molecule type" value="Genomic_DNA"/>
</dbReference>
<dbReference type="EMBL" id="CH474031">
    <property type="protein sequence ID" value="EDL90762.1"/>
    <property type="molecule type" value="Genomic_DNA"/>
</dbReference>
<dbReference type="PIR" id="S43677">
    <property type="entry name" value="S43677"/>
</dbReference>
<dbReference type="RefSeq" id="NP_036987.2">
    <property type="nucleotide sequence ID" value="NM_012855.2"/>
</dbReference>
<dbReference type="RefSeq" id="XP_008769286.1">
    <property type="nucleotide sequence ID" value="XM_008771064.4"/>
</dbReference>
<dbReference type="RefSeq" id="XP_038950131.1">
    <property type="nucleotide sequence ID" value="XM_039094203.2"/>
</dbReference>
<dbReference type="RefSeq" id="XP_063131138.1">
    <property type="nucleotide sequence ID" value="XM_063275068.1"/>
</dbReference>
<dbReference type="SMR" id="Q63272"/>
<dbReference type="FunCoup" id="Q63272">
    <property type="interactions" value="300"/>
</dbReference>
<dbReference type="STRING" id="10116.ENSRNOP00000025312"/>
<dbReference type="BindingDB" id="Q63272"/>
<dbReference type="ChEMBL" id="CHEMBL4295857"/>
<dbReference type="DrugCentral" id="Q63272"/>
<dbReference type="GlyGen" id="Q63272">
    <property type="glycosylation" value="2 sites"/>
</dbReference>
<dbReference type="iPTMnet" id="Q63272"/>
<dbReference type="PhosphoSitePlus" id="Q63272"/>
<dbReference type="PaxDb" id="10116-ENSRNOP00000025312"/>
<dbReference type="GeneID" id="25326"/>
<dbReference type="KEGG" id="rno:25326"/>
<dbReference type="UCSC" id="RGD:2940">
    <property type="organism name" value="rat"/>
</dbReference>
<dbReference type="AGR" id="RGD:2940"/>
<dbReference type="CTD" id="3718"/>
<dbReference type="RGD" id="2940">
    <property type="gene designation" value="Jak3"/>
</dbReference>
<dbReference type="VEuPathDB" id="HostDB:ENSRNOG00000018669"/>
<dbReference type="eggNOG" id="KOG0197">
    <property type="taxonomic scope" value="Eukaryota"/>
</dbReference>
<dbReference type="InParanoid" id="Q63272"/>
<dbReference type="OrthoDB" id="1915767at2759"/>
<dbReference type="BRENDA" id="2.7.10.2">
    <property type="organism ID" value="5301"/>
</dbReference>
<dbReference type="Reactome" id="R-RNO-1266695">
    <property type="pathway name" value="Interleukin-7 signaling"/>
</dbReference>
<dbReference type="Reactome" id="R-RNO-201556">
    <property type="pathway name" value="Signaling by ALK"/>
</dbReference>
<dbReference type="Reactome" id="R-RNO-5673001">
    <property type="pathway name" value="RAF/MAP kinase cascade"/>
</dbReference>
<dbReference type="Reactome" id="R-RNO-6785807">
    <property type="pathway name" value="Interleukin-4 and Interleukin-13 signaling"/>
</dbReference>
<dbReference type="Reactome" id="R-RNO-8854691">
    <property type="pathway name" value="Interleukin-20 family signaling"/>
</dbReference>
<dbReference type="Reactome" id="R-RNO-8983432">
    <property type="pathway name" value="Interleukin-15 signaling"/>
</dbReference>
<dbReference type="Reactome" id="R-RNO-8985947">
    <property type="pathway name" value="Interleukin-9 signaling"/>
</dbReference>
<dbReference type="Reactome" id="R-RNO-9020558">
    <property type="pathway name" value="Interleukin-2 signaling"/>
</dbReference>
<dbReference type="Reactome" id="R-RNO-9020958">
    <property type="pathway name" value="Interleukin-21 signaling"/>
</dbReference>
<dbReference type="Reactome" id="R-RNO-912526">
    <property type="pathway name" value="Interleukin receptor SHC signaling"/>
</dbReference>
<dbReference type="PRO" id="PR:Q63272"/>
<dbReference type="Proteomes" id="UP000002494">
    <property type="component" value="Chromosome 16"/>
</dbReference>
<dbReference type="Proteomes" id="UP000234681">
    <property type="component" value="Chromosome 16"/>
</dbReference>
<dbReference type="Bgee" id="ENSRNOG00000018669">
    <property type="expression patterns" value="Expressed in thymus and 19 other cell types or tissues"/>
</dbReference>
<dbReference type="GO" id="GO:0005856">
    <property type="term" value="C:cytoskeleton"/>
    <property type="evidence" value="ECO:0007669"/>
    <property type="project" value="InterPro"/>
</dbReference>
<dbReference type="GO" id="GO:0005829">
    <property type="term" value="C:cytosol"/>
    <property type="evidence" value="ECO:0000318"/>
    <property type="project" value="GO_Central"/>
</dbReference>
<dbReference type="GO" id="GO:0012505">
    <property type="term" value="C:endomembrane system"/>
    <property type="evidence" value="ECO:0007669"/>
    <property type="project" value="UniProtKB-SubCell"/>
</dbReference>
<dbReference type="GO" id="GO:0031234">
    <property type="term" value="C:extrinsic component of cytoplasmic side of plasma membrane"/>
    <property type="evidence" value="ECO:0000266"/>
    <property type="project" value="RGD"/>
</dbReference>
<dbReference type="GO" id="GO:0005524">
    <property type="term" value="F:ATP binding"/>
    <property type="evidence" value="ECO:0007669"/>
    <property type="project" value="UniProtKB-KW"/>
</dbReference>
<dbReference type="GO" id="GO:0005131">
    <property type="term" value="F:growth hormone receptor binding"/>
    <property type="evidence" value="ECO:0000318"/>
    <property type="project" value="GO_Central"/>
</dbReference>
<dbReference type="GO" id="GO:0004715">
    <property type="term" value="F:non-membrane spanning protein tyrosine kinase activity"/>
    <property type="evidence" value="ECO:0000318"/>
    <property type="project" value="GO_Central"/>
</dbReference>
<dbReference type="GO" id="GO:0019903">
    <property type="term" value="F:protein phosphatase binding"/>
    <property type="evidence" value="ECO:0000266"/>
    <property type="project" value="RGD"/>
</dbReference>
<dbReference type="GO" id="GO:0004713">
    <property type="term" value="F:protein tyrosine kinase activity"/>
    <property type="evidence" value="ECO:0000266"/>
    <property type="project" value="RGD"/>
</dbReference>
<dbReference type="GO" id="GO:0002250">
    <property type="term" value="P:adaptive immune response"/>
    <property type="evidence" value="ECO:0007669"/>
    <property type="project" value="UniProtKB-KW"/>
</dbReference>
<dbReference type="GO" id="GO:0030183">
    <property type="term" value="P:B cell differentiation"/>
    <property type="evidence" value="ECO:0000250"/>
    <property type="project" value="BHF-UCL"/>
</dbReference>
<dbReference type="GO" id="GO:0030154">
    <property type="term" value="P:cell differentiation"/>
    <property type="evidence" value="ECO:0000318"/>
    <property type="project" value="GO_Central"/>
</dbReference>
<dbReference type="GO" id="GO:0007259">
    <property type="term" value="P:cell surface receptor signaling pathway via JAK-STAT"/>
    <property type="evidence" value="ECO:0000318"/>
    <property type="project" value="GO_Central"/>
</dbReference>
<dbReference type="GO" id="GO:0071345">
    <property type="term" value="P:cellular response to cytokine stimulus"/>
    <property type="evidence" value="ECO:0000266"/>
    <property type="project" value="RGD"/>
</dbReference>
<dbReference type="GO" id="GO:0019221">
    <property type="term" value="P:cytokine-mediated signaling pathway"/>
    <property type="evidence" value="ECO:0000314"/>
    <property type="project" value="RGD"/>
</dbReference>
<dbReference type="GO" id="GO:0007167">
    <property type="term" value="P:enzyme-linked receptor protein signaling pathway"/>
    <property type="evidence" value="ECO:0000250"/>
    <property type="project" value="BHF-UCL"/>
</dbReference>
<dbReference type="GO" id="GO:0060397">
    <property type="term" value="P:growth hormone receptor signaling pathway via JAK-STAT"/>
    <property type="evidence" value="ECO:0000318"/>
    <property type="project" value="GO_Central"/>
</dbReference>
<dbReference type="GO" id="GO:0045087">
    <property type="term" value="P:innate immune response"/>
    <property type="evidence" value="ECO:0007669"/>
    <property type="project" value="UniProtKB-KW"/>
</dbReference>
<dbReference type="GO" id="GO:0035723">
    <property type="term" value="P:interleukin-15-mediated signaling pathway"/>
    <property type="evidence" value="ECO:0000266"/>
    <property type="project" value="RGD"/>
</dbReference>
<dbReference type="GO" id="GO:0038110">
    <property type="term" value="P:interleukin-2-mediated signaling pathway"/>
    <property type="evidence" value="ECO:0000266"/>
    <property type="project" value="RGD"/>
</dbReference>
<dbReference type="GO" id="GO:0035771">
    <property type="term" value="P:interleukin-4-mediated signaling pathway"/>
    <property type="evidence" value="ECO:0000266"/>
    <property type="project" value="RGD"/>
</dbReference>
<dbReference type="GO" id="GO:0038111">
    <property type="term" value="P:interleukin-7-mediated signaling pathway"/>
    <property type="evidence" value="ECO:0000266"/>
    <property type="project" value="RGD"/>
</dbReference>
<dbReference type="GO" id="GO:0038113">
    <property type="term" value="P:interleukin-9-mediated signaling pathway"/>
    <property type="evidence" value="ECO:0000266"/>
    <property type="project" value="RGD"/>
</dbReference>
<dbReference type="GO" id="GO:0035556">
    <property type="term" value="P:intracellular signal transduction"/>
    <property type="evidence" value="ECO:0000250"/>
    <property type="project" value="BHF-UCL"/>
</dbReference>
<dbReference type="GO" id="GO:1903660">
    <property type="term" value="P:negative regulation of complement-dependent cytotoxicity"/>
    <property type="evidence" value="ECO:0000266"/>
    <property type="project" value="RGD"/>
</dbReference>
<dbReference type="GO" id="GO:0002731">
    <property type="term" value="P:negative regulation of dendritic cell cytokine production"/>
    <property type="evidence" value="ECO:0000250"/>
    <property type="project" value="BHF-UCL"/>
</dbReference>
<dbReference type="GO" id="GO:0010561">
    <property type="term" value="P:negative regulation of glycoprotein biosynthetic process"/>
    <property type="evidence" value="ECO:0000250"/>
    <property type="project" value="BHF-UCL"/>
</dbReference>
<dbReference type="GO" id="GO:0032693">
    <property type="term" value="P:negative regulation of interleukin-10 production"/>
    <property type="evidence" value="ECO:0000250"/>
    <property type="project" value="BHF-UCL"/>
</dbReference>
<dbReference type="GO" id="GO:0032695">
    <property type="term" value="P:negative regulation of interleukin-12 production"/>
    <property type="evidence" value="ECO:0000250"/>
    <property type="project" value="BHF-UCL"/>
</dbReference>
<dbReference type="GO" id="GO:0050868">
    <property type="term" value="P:negative regulation of T cell activation"/>
    <property type="evidence" value="ECO:0000250"/>
    <property type="project" value="BHF-UCL"/>
</dbReference>
<dbReference type="GO" id="GO:0045626">
    <property type="term" value="P:negative regulation of T-helper 1 cell differentiation"/>
    <property type="evidence" value="ECO:0000250"/>
    <property type="project" value="BHF-UCL"/>
</dbReference>
<dbReference type="GO" id="GO:2000329">
    <property type="term" value="P:negative regulation of T-helper 17 cell lineage commitment"/>
    <property type="evidence" value="ECO:0000266"/>
    <property type="project" value="RGD"/>
</dbReference>
<dbReference type="GO" id="GO:0070244">
    <property type="term" value="P:negative regulation of thymocyte apoptotic process"/>
    <property type="evidence" value="ECO:0000250"/>
    <property type="project" value="BHF-UCL"/>
</dbReference>
<dbReference type="GO" id="GO:0042104">
    <property type="term" value="P:positive regulation of activated T cell proliferation"/>
    <property type="evidence" value="ECO:0000315"/>
    <property type="project" value="RGD"/>
</dbReference>
<dbReference type="GO" id="GO:0051928">
    <property type="term" value="P:positive regulation of calcium ion transport"/>
    <property type="evidence" value="ECO:0000315"/>
    <property type="project" value="RGD"/>
</dbReference>
<dbReference type="GO" id="GO:0007204">
    <property type="term" value="P:positive regulation of cytosolic calcium ion concentration"/>
    <property type="evidence" value="ECO:0000315"/>
    <property type="project" value="RGD"/>
</dbReference>
<dbReference type="GO" id="GO:2000670">
    <property type="term" value="P:positive regulation of dendritic cell apoptotic process"/>
    <property type="evidence" value="ECO:0000266"/>
    <property type="project" value="RGD"/>
</dbReference>
<dbReference type="GO" id="GO:2001241">
    <property type="term" value="P:positive regulation of extrinsic apoptotic signaling pathway in absence of ligand"/>
    <property type="evidence" value="ECO:0000266"/>
    <property type="project" value="RGD"/>
</dbReference>
<dbReference type="GO" id="GO:0045429">
    <property type="term" value="P:positive regulation of nitric oxide biosynthetic process"/>
    <property type="evidence" value="ECO:0000315"/>
    <property type="project" value="RGD"/>
</dbReference>
<dbReference type="GO" id="GO:0042102">
    <property type="term" value="P:positive regulation of T cell proliferation"/>
    <property type="evidence" value="ECO:0000314"/>
    <property type="project" value="BHF-UCL"/>
</dbReference>
<dbReference type="GO" id="GO:0045944">
    <property type="term" value="P:positive regulation of transcription by RNA polymerase II"/>
    <property type="evidence" value="ECO:0000266"/>
    <property type="project" value="RGD"/>
</dbReference>
<dbReference type="GO" id="GO:0042981">
    <property type="term" value="P:regulation of apoptotic process"/>
    <property type="evidence" value="ECO:0000318"/>
    <property type="project" value="GO_Central"/>
</dbReference>
<dbReference type="GO" id="GO:0070232">
    <property type="term" value="P:regulation of T cell apoptotic process"/>
    <property type="evidence" value="ECO:0000250"/>
    <property type="project" value="BHF-UCL"/>
</dbReference>
<dbReference type="GO" id="GO:0070670">
    <property type="term" value="P:response to interleukin-4"/>
    <property type="evidence" value="ECO:0000266"/>
    <property type="project" value="RGD"/>
</dbReference>
<dbReference type="GO" id="GO:0043029">
    <property type="term" value="P:T cell homeostasis"/>
    <property type="evidence" value="ECO:0000250"/>
    <property type="project" value="BHF-UCL"/>
</dbReference>
<dbReference type="GO" id="GO:0006366">
    <property type="term" value="P:transcription by RNA polymerase II"/>
    <property type="evidence" value="ECO:0000266"/>
    <property type="project" value="RGD"/>
</dbReference>
<dbReference type="CDD" id="cd13334">
    <property type="entry name" value="FERM_C_JAK3"/>
    <property type="match status" value="1"/>
</dbReference>
<dbReference type="FunFam" id="1.10.510.10:FF:000110">
    <property type="entry name" value="Tyrosine-protein kinase"/>
    <property type="match status" value="1"/>
</dbReference>
<dbReference type="FunFam" id="3.30.200.20:FF:000084">
    <property type="entry name" value="Tyrosine-protein kinase"/>
    <property type="match status" value="1"/>
</dbReference>
<dbReference type="FunFam" id="3.30.200.20:FF:000135">
    <property type="entry name" value="Tyrosine-protein kinase"/>
    <property type="match status" value="1"/>
</dbReference>
<dbReference type="FunFam" id="3.30.505.10:FF:000073">
    <property type="entry name" value="Tyrosine-protein kinase"/>
    <property type="match status" value="1"/>
</dbReference>
<dbReference type="FunFam" id="1.10.510.10:FF:000114">
    <property type="entry name" value="Tyrosine-protein kinase JAK2"/>
    <property type="match status" value="1"/>
</dbReference>
<dbReference type="Gene3D" id="3.30.200.20">
    <property type="entry name" value="Phosphorylase Kinase, domain 1"/>
    <property type="match status" value="2"/>
</dbReference>
<dbReference type="Gene3D" id="2.30.29.30">
    <property type="entry name" value="Pleckstrin-homology domain (PH domain)/Phosphotyrosine-binding domain (PTB)"/>
    <property type="match status" value="1"/>
</dbReference>
<dbReference type="Gene3D" id="3.30.505.10">
    <property type="entry name" value="SH2 domain"/>
    <property type="match status" value="1"/>
</dbReference>
<dbReference type="Gene3D" id="1.10.510.10">
    <property type="entry name" value="Transferase(Phosphotransferase) domain 1"/>
    <property type="match status" value="2"/>
</dbReference>
<dbReference type="InterPro" id="IPR019749">
    <property type="entry name" value="Band_41_domain"/>
</dbReference>
<dbReference type="InterPro" id="IPR000299">
    <property type="entry name" value="FERM_domain"/>
</dbReference>
<dbReference type="InterPro" id="IPR041155">
    <property type="entry name" value="FERM_F1"/>
</dbReference>
<dbReference type="InterPro" id="IPR041046">
    <property type="entry name" value="FERM_F2"/>
</dbReference>
<dbReference type="InterPro" id="IPR051286">
    <property type="entry name" value="JAK"/>
</dbReference>
<dbReference type="InterPro" id="IPR041381">
    <property type="entry name" value="JAK1-3/TYK2_PHL_dom"/>
</dbReference>
<dbReference type="InterPro" id="IPR011009">
    <property type="entry name" value="Kinase-like_dom_sf"/>
</dbReference>
<dbReference type="InterPro" id="IPR011993">
    <property type="entry name" value="PH-like_dom_sf"/>
</dbReference>
<dbReference type="InterPro" id="IPR000719">
    <property type="entry name" value="Prot_kinase_dom"/>
</dbReference>
<dbReference type="InterPro" id="IPR017441">
    <property type="entry name" value="Protein_kinase_ATP_BS"/>
</dbReference>
<dbReference type="InterPro" id="IPR001245">
    <property type="entry name" value="Ser-Thr/Tyr_kinase_cat_dom"/>
</dbReference>
<dbReference type="InterPro" id="IPR000980">
    <property type="entry name" value="SH2"/>
</dbReference>
<dbReference type="InterPro" id="IPR036860">
    <property type="entry name" value="SH2_dom_sf"/>
</dbReference>
<dbReference type="InterPro" id="IPR008266">
    <property type="entry name" value="Tyr_kinase_AS"/>
</dbReference>
<dbReference type="InterPro" id="IPR020635">
    <property type="entry name" value="Tyr_kinase_cat_dom"/>
</dbReference>
<dbReference type="InterPro" id="IPR016251">
    <property type="entry name" value="Tyr_kinase_non-rcpt_Jak/Tyk2"/>
</dbReference>
<dbReference type="InterPro" id="IPR020775">
    <property type="entry name" value="Tyr_kinase_non-rcpt_Jak3"/>
</dbReference>
<dbReference type="PANTHER" id="PTHR45807">
    <property type="entry name" value="TYROSINE-PROTEIN KINASE HOPSCOTCH"/>
    <property type="match status" value="1"/>
</dbReference>
<dbReference type="PANTHER" id="PTHR45807:SF3">
    <property type="entry name" value="TYROSINE-PROTEIN KINASE JAK3"/>
    <property type="match status" value="1"/>
</dbReference>
<dbReference type="Pfam" id="PF18379">
    <property type="entry name" value="FERM_F1"/>
    <property type="match status" value="1"/>
</dbReference>
<dbReference type="Pfam" id="PF18377">
    <property type="entry name" value="FERM_F2"/>
    <property type="match status" value="1"/>
</dbReference>
<dbReference type="Pfam" id="PF17887">
    <property type="entry name" value="Jak1_Phl"/>
    <property type="match status" value="1"/>
</dbReference>
<dbReference type="Pfam" id="PF07714">
    <property type="entry name" value="PK_Tyr_Ser-Thr"/>
    <property type="match status" value="2"/>
</dbReference>
<dbReference type="Pfam" id="PF21990">
    <property type="entry name" value="SH2_1"/>
    <property type="match status" value="1"/>
</dbReference>
<dbReference type="PIRSF" id="PIRSF000636">
    <property type="entry name" value="TyrPK_Jak"/>
    <property type="match status" value="1"/>
</dbReference>
<dbReference type="PRINTS" id="PR01823">
    <property type="entry name" value="JANUSKINASE"/>
</dbReference>
<dbReference type="PRINTS" id="PR01826">
    <property type="entry name" value="JANUSKINASE3"/>
</dbReference>
<dbReference type="PRINTS" id="PR00109">
    <property type="entry name" value="TYRKINASE"/>
</dbReference>
<dbReference type="SMART" id="SM00295">
    <property type="entry name" value="B41"/>
    <property type="match status" value="1"/>
</dbReference>
<dbReference type="SMART" id="SM00252">
    <property type="entry name" value="SH2"/>
    <property type="match status" value="1"/>
</dbReference>
<dbReference type="SMART" id="SM00219">
    <property type="entry name" value="TyrKc"/>
    <property type="match status" value="2"/>
</dbReference>
<dbReference type="SUPFAM" id="SSF50729">
    <property type="entry name" value="PH domain-like"/>
    <property type="match status" value="1"/>
</dbReference>
<dbReference type="SUPFAM" id="SSF56112">
    <property type="entry name" value="Protein kinase-like (PK-like)"/>
    <property type="match status" value="2"/>
</dbReference>
<dbReference type="SUPFAM" id="SSF55550">
    <property type="entry name" value="SH2 domain"/>
    <property type="match status" value="1"/>
</dbReference>
<dbReference type="PROSITE" id="PS50057">
    <property type="entry name" value="FERM_3"/>
    <property type="match status" value="1"/>
</dbReference>
<dbReference type="PROSITE" id="PS00107">
    <property type="entry name" value="PROTEIN_KINASE_ATP"/>
    <property type="match status" value="1"/>
</dbReference>
<dbReference type="PROSITE" id="PS50011">
    <property type="entry name" value="PROTEIN_KINASE_DOM"/>
    <property type="match status" value="2"/>
</dbReference>
<dbReference type="PROSITE" id="PS00109">
    <property type="entry name" value="PROTEIN_KINASE_TYR"/>
    <property type="match status" value="1"/>
</dbReference>
<accession>Q63272</accession>
<accession>F1LR79</accession>
<reference key="1">
    <citation type="journal article" date="1994" name="FEBS Lett.">
        <title>Molecular cloning of rat JAK3, a novel member of the JAK family of protein tyrosine kinases.</title>
        <authorList>
            <person name="Takahashi T."/>
            <person name="Shirasawa T."/>
        </authorList>
    </citation>
    <scope>NUCLEOTIDE SEQUENCE [MRNA]</scope>
    <source>
        <tissue>Spleen</tissue>
    </source>
</reference>
<reference key="2">
    <citation type="journal article" date="2004" name="Nature">
        <title>Genome sequence of the Brown Norway rat yields insights into mammalian evolution.</title>
        <authorList>
            <person name="Gibbs R.A."/>
            <person name="Weinstock G.M."/>
            <person name="Metzker M.L."/>
            <person name="Muzny D.M."/>
            <person name="Sodergren E.J."/>
            <person name="Scherer S."/>
            <person name="Scott G."/>
            <person name="Steffen D."/>
            <person name="Worley K.C."/>
            <person name="Burch P.E."/>
            <person name="Okwuonu G."/>
            <person name="Hines S."/>
            <person name="Lewis L."/>
            <person name="Deramo C."/>
            <person name="Delgado O."/>
            <person name="Dugan-Rocha S."/>
            <person name="Miner G."/>
            <person name="Morgan M."/>
            <person name="Hawes A."/>
            <person name="Gill R."/>
            <person name="Holt R.A."/>
            <person name="Adams M.D."/>
            <person name="Amanatides P.G."/>
            <person name="Baden-Tillson H."/>
            <person name="Barnstead M."/>
            <person name="Chin S."/>
            <person name="Evans C.A."/>
            <person name="Ferriera S."/>
            <person name="Fosler C."/>
            <person name="Glodek A."/>
            <person name="Gu Z."/>
            <person name="Jennings D."/>
            <person name="Kraft C.L."/>
            <person name="Nguyen T."/>
            <person name="Pfannkoch C.M."/>
            <person name="Sitter C."/>
            <person name="Sutton G.G."/>
            <person name="Venter J.C."/>
            <person name="Woodage T."/>
            <person name="Smith D."/>
            <person name="Lee H.-M."/>
            <person name="Gustafson E."/>
            <person name="Cahill P."/>
            <person name="Kana A."/>
            <person name="Doucette-Stamm L."/>
            <person name="Weinstock K."/>
            <person name="Fechtel K."/>
            <person name="Weiss R.B."/>
            <person name="Dunn D.M."/>
            <person name="Green E.D."/>
            <person name="Blakesley R.W."/>
            <person name="Bouffard G.G."/>
            <person name="De Jong P.J."/>
            <person name="Osoegawa K."/>
            <person name="Zhu B."/>
            <person name="Marra M."/>
            <person name="Schein J."/>
            <person name="Bosdet I."/>
            <person name="Fjell C."/>
            <person name="Jones S."/>
            <person name="Krzywinski M."/>
            <person name="Mathewson C."/>
            <person name="Siddiqui A."/>
            <person name="Wye N."/>
            <person name="McPherson J."/>
            <person name="Zhao S."/>
            <person name="Fraser C.M."/>
            <person name="Shetty J."/>
            <person name="Shatsman S."/>
            <person name="Geer K."/>
            <person name="Chen Y."/>
            <person name="Abramzon S."/>
            <person name="Nierman W.C."/>
            <person name="Havlak P.H."/>
            <person name="Chen R."/>
            <person name="Durbin K.J."/>
            <person name="Egan A."/>
            <person name="Ren Y."/>
            <person name="Song X.-Z."/>
            <person name="Li B."/>
            <person name="Liu Y."/>
            <person name="Qin X."/>
            <person name="Cawley S."/>
            <person name="Cooney A.J."/>
            <person name="D'Souza L.M."/>
            <person name="Martin K."/>
            <person name="Wu J.Q."/>
            <person name="Gonzalez-Garay M.L."/>
            <person name="Jackson A.R."/>
            <person name="Kalafus K.J."/>
            <person name="McLeod M.P."/>
            <person name="Milosavljevic A."/>
            <person name="Virk D."/>
            <person name="Volkov A."/>
            <person name="Wheeler D.A."/>
            <person name="Zhang Z."/>
            <person name="Bailey J.A."/>
            <person name="Eichler E.E."/>
            <person name="Tuzun E."/>
            <person name="Birney E."/>
            <person name="Mongin E."/>
            <person name="Ureta-Vidal A."/>
            <person name="Woodwark C."/>
            <person name="Zdobnov E."/>
            <person name="Bork P."/>
            <person name="Suyama M."/>
            <person name="Torrents D."/>
            <person name="Alexandersson M."/>
            <person name="Trask B.J."/>
            <person name="Young J.M."/>
            <person name="Huang H."/>
            <person name="Wang H."/>
            <person name="Xing H."/>
            <person name="Daniels S."/>
            <person name="Gietzen D."/>
            <person name="Schmidt J."/>
            <person name="Stevens K."/>
            <person name="Vitt U."/>
            <person name="Wingrove J."/>
            <person name="Camara F."/>
            <person name="Mar Alba M."/>
            <person name="Abril J.F."/>
            <person name="Guigo R."/>
            <person name="Smit A."/>
            <person name="Dubchak I."/>
            <person name="Rubin E.M."/>
            <person name="Couronne O."/>
            <person name="Poliakov A."/>
            <person name="Huebner N."/>
            <person name="Ganten D."/>
            <person name="Goesele C."/>
            <person name="Hummel O."/>
            <person name="Kreitler T."/>
            <person name="Lee Y.-A."/>
            <person name="Monti J."/>
            <person name="Schulz H."/>
            <person name="Zimdahl H."/>
            <person name="Himmelbauer H."/>
            <person name="Lehrach H."/>
            <person name="Jacob H.J."/>
            <person name="Bromberg S."/>
            <person name="Gullings-Handley J."/>
            <person name="Jensen-Seaman M.I."/>
            <person name="Kwitek A.E."/>
            <person name="Lazar J."/>
            <person name="Pasko D."/>
            <person name="Tonellato P.J."/>
            <person name="Twigger S."/>
            <person name="Ponting C.P."/>
            <person name="Duarte J.M."/>
            <person name="Rice S."/>
            <person name="Goodstadt L."/>
            <person name="Beatson S.A."/>
            <person name="Emes R.D."/>
            <person name="Winter E.E."/>
            <person name="Webber C."/>
            <person name="Brandt P."/>
            <person name="Nyakatura G."/>
            <person name="Adetobi M."/>
            <person name="Chiaromonte F."/>
            <person name="Elnitski L."/>
            <person name="Eswara P."/>
            <person name="Hardison R.C."/>
            <person name="Hou M."/>
            <person name="Kolbe D."/>
            <person name="Makova K."/>
            <person name="Miller W."/>
            <person name="Nekrutenko A."/>
            <person name="Riemer C."/>
            <person name="Schwartz S."/>
            <person name="Taylor J."/>
            <person name="Yang S."/>
            <person name="Zhang Y."/>
            <person name="Lindpaintner K."/>
            <person name="Andrews T.D."/>
            <person name="Caccamo M."/>
            <person name="Clamp M."/>
            <person name="Clarke L."/>
            <person name="Curwen V."/>
            <person name="Durbin R.M."/>
            <person name="Eyras E."/>
            <person name="Searle S.M."/>
            <person name="Cooper G.M."/>
            <person name="Batzoglou S."/>
            <person name="Brudno M."/>
            <person name="Sidow A."/>
            <person name="Stone E.A."/>
            <person name="Payseur B.A."/>
            <person name="Bourque G."/>
            <person name="Lopez-Otin C."/>
            <person name="Puente X.S."/>
            <person name="Chakrabarti K."/>
            <person name="Chatterji S."/>
            <person name="Dewey C."/>
            <person name="Pachter L."/>
            <person name="Bray N."/>
            <person name="Yap V.B."/>
            <person name="Caspi A."/>
            <person name="Tesler G."/>
            <person name="Pevzner P.A."/>
            <person name="Haussler D."/>
            <person name="Roskin K.M."/>
            <person name="Baertsch R."/>
            <person name="Clawson H."/>
            <person name="Furey T.S."/>
            <person name="Hinrichs A.S."/>
            <person name="Karolchik D."/>
            <person name="Kent W.J."/>
            <person name="Rosenbloom K.R."/>
            <person name="Trumbower H."/>
            <person name="Weirauch M."/>
            <person name="Cooper D.N."/>
            <person name="Stenson P.D."/>
            <person name="Ma B."/>
            <person name="Brent M."/>
            <person name="Arumugam M."/>
            <person name="Shteynberg D."/>
            <person name="Copley R.R."/>
            <person name="Taylor M.S."/>
            <person name="Riethman H."/>
            <person name="Mudunuri U."/>
            <person name="Peterson J."/>
            <person name="Guyer M."/>
            <person name="Felsenfeld A."/>
            <person name="Old S."/>
            <person name="Mockrin S."/>
            <person name="Collins F.S."/>
        </authorList>
    </citation>
    <scope>NUCLEOTIDE SEQUENCE [LARGE SCALE GENOMIC DNA]</scope>
    <source>
        <strain>Brown Norway</strain>
    </source>
</reference>
<reference key="3">
    <citation type="submission" date="2005-09" db="EMBL/GenBank/DDBJ databases">
        <authorList>
            <person name="Mural R.J."/>
            <person name="Adams M.D."/>
            <person name="Myers E.W."/>
            <person name="Smith H.O."/>
            <person name="Venter J.C."/>
        </authorList>
    </citation>
    <scope>NUCLEOTIDE SEQUENCE [LARGE SCALE GENOMIC DNA]</scope>
    <source>
        <strain>Brown Norway</strain>
    </source>
</reference>
<comment type="function">
    <text evidence="1">Non-receptor tyrosine kinase involved in various processes such as cell growth, development, or differentiation. Mediates essential signaling events in both innate and adaptive immunity and plays a crucial role in hematopoiesis during T-cells development. In the cytoplasm, plays a pivotal role in signal transduction via its association with type I receptors sharing the common subunit gamma such as IL2R, IL4R, IL7R, IL9R, IL15R and IL21R. Following ligand binding to cell surface receptors, phosphorylates specific tyrosine residues on the cytoplasmic tails of the receptor, creating docking sites for STATs proteins. Subsequently, phosphorylates the STATs proteins once they are recruited to the receptor. Phosphorylated STATs then form homodimer or heterodimers and translocate to the nucleus to activate gene transcription. For example, upon IL2R activation by IL2, JAK1 and JAK3 molecules bind to IL2R beta (IL2RB) and gamma chain (IL2RG) subunits inducing the tyrosine phosphorylation of both receptor subunits on their cytoplasmic domain. Then, STAT5A and STAT5B are recruited, phosphorylated and activated by JAK1 and JAK3. Once activated, dimerized STAT5 translocates to the nucleus and promotes the transcription of specific target genes in a cytokine-specific fashion (By similarity).</text>
</comment>
<comment type="catalytic activity">
    <reaction evidence="6">
        <text>L-tyrosyl-[protein] + ATP = O-phospho-L-tyrosyl-[protein] + ADP + H(+)</text>
        <dbReference type="Rhea" id="RHEA:10596"/>
        <dbReference type="Rhea" id="RHEA-COMP:10136"/>
        <dbReference type="Rhea" id="RHEA-COMP:20101"/>
        <dbReference type="ChEBI" id="CHEBI:15378"/>
        <dbReference type="ChEBI" id="CHEBI:30616"/>
        <dbReference type="ChEBI" id="CHEBI:46858"/>
        <dbReference type="ChEBI" id="CHEBI:61978"/>
        <dbReference type="ChEBI" id="CHEBI:456216"/>
        <dbReference type="EC" id="2.7.10.2"/>
    </reaction>
</comment>
<comment type="subunit">
    <text evidence="2 3">Interacts with STAM2 and MYO18A (By similarity). Interacts with SHB (By similarity). Interacts with CD69 (By similarity).</text>
</comment>
<comment type="subcellular location">
    <subcellularLocation>
        <location evidence="1">Endomembrane system</location>
        <topology evidence="1">Peripheral membrane protein</topology>
    </subcellularLocation>
    <subcellularLocation>
        <location evidence="1">Cytoplasm</location>
    </subcellularLocation>
</comment>
<comment type="tissue specificity">
    <text>In contrast with the ubiquitous expression of the other JAKs, JAK3 is predominantly expressed in hematopoietic tissues.</text>
</comment>
<comment type="domain">
    <text>Possesses two phosphotransferase domains. The second one contains the catalytic domain, while the presence of a pseudokinase domain is required for suppression of basal activity of JAK3.</text>
</comment>
<comment type="PTM">
    <text evidence="1">Autophosphorylated, leading to regulate its activity. IL2 promotes phosphorylation on tyrosine residues, including autophosphorylation on Tyr-781 (By similarity). Dephosphorylation of Tyr-976 and Tyr-977 by PTPN2 negatively regulates cytokine-mediated signaling (By similarity).</text>
</comment>
<comment type="similarity">
    <text evidence="5">Belongs to the protein kinase superfamily. Tyr protein kinase family. JAK subfamily.</text>
</comment>
<comment type="sequence caution" evidence="7">
    <conflict type="frameshift">
        <sequence resource="EMBL-CDS" id="BAA05868"/>
    </conflict>
</comment>